<dbReference type="EMBL" id="AY560839">
    <property type="protein sequence ID" value="AAT44906.1"/>
    <property type="molecule type" value="mRNA"/>
</dbReference>
<dbReference type="EMBL" id="AC020576">
    <property type="protein sequence ID" value="AAF78266.1"/>
    <property type="molecule type" value="Genomic_DNA"/>
</dbReference>
<dbReference type="EMBL" id="CP002684">
    <property type="protein sequence ID" value="AEE32056.1"/>
    <property type="molecule type" value="Genomic_DNA"/>
</dbReference>
<dbReference type="EMBL" id="BT025270">
    <property type="protein sequence ID" value="ABF19023.1"/>
    <property type="molecule type" value="mRNA"/>
</dbReference>
<dbReference type="EMBL" id="AK175503">
    <property type="protein sequence ID" value="BAD43266.1"/>
    <property type="molecule type" value="mRNA"/>
</dbReference>
<dbReference type="PIR" id="D96507">
    <property type="entry name" value="D96507"/>
</dbReference>
<dbReference type="RefSeq" id="NP_175104.1">
    <property type="nucleotide sequence ID" value="NM_103564.3"/>
</dbReference>
<dbReference type="SMR" id="Q9LPE8"/>
<dbReference type="BioGRID" id="26272">
    <property type="interactions" value="13"/>
</dbReference>
<dbReference type="FunCoup" id="Q9LPE8">
    <property type="interactions" value="14"/>
</dbReference>
<dbReference type="IntAct" id="Q9LPE8">
    <property type="interactions" value="12"/>
</dbReference>
<dbReference type="STRING" id="3702.Q9LPE8"/>
<dbReference type="PaxDb" id="3702-AT1G44830.1"/>
<dbReference type="EnsemblPlants" id="AT1G44830.1">
    <property type="protein sequence ID" value="AT1G44830.1"/>
    <property type="gene ID" value="AT1G44830"/>
</dbReference>
<dbReference type="GeneID" id="841047"/>
<dbReference type="Gramene" id="AT1G44830.1">
    <property type="protein sequence ID" value="AT1G44830.1"/>
    <property type="gene ID" value="AT1G44830"/>
</dbReference>
<dbReference type="KEGG" id="ath:AT1G44830"/>
<dbReference type="Araport" id="AT1G44830"/>
<dbReference type="TAIR" id="AT1G44830">
    <property type="gene designation" value="ERF014"/>
</dbReference>
<dbReference type="eggNOG" id="ENOG502RMWY">
    <property type="taxonomic scope" value="Eukaryota"/>
</dbReference>
<dbReference type="HOGENOM" id="CLU_063331_2_0_1"/>
<dbReference type="InParanoid" id="Q9LPE8"/>
<dbReference type="OMA" id="MAMMDSW"/>
<dbReference type="OrthoDB" id="665906at2759"/>
<dbReference type="PhylomeDB" id="Q9LPE8"/>
<dbReference type="PRO" id="PR:Q9LPE8"/>
<dbReference type="Proteomes" id="UP000006548">
    <property type="component" value="Chromosome 1"/>
</dbReference>
<dbReference type="ExpressionAtlas" id="Q9LPE8">
    <property type="expression patterns" value="baseline and differential"/>
</dbReference>
<dbReference type="GO" id="GO:0005634">
    <property type="term" value="C:nucleus"/>
    <property type="evidence" value="ECO:0000314"/>
    <property type="project" value="TAIR"/>
</dbReference>
<dbReference type="GO" id="GO:0003700">
    <property type="term" value="F:DNA-binding transcription factor activity"/>
    <property type="evidence" value="ECO:0000250"/>
    <property type="project" value="TAIR"/>
</dbReference>
<dbReference type="GO" id="GO:0000976">
    <property type="term" value="F:transcription cis-regulatory region binding"/>
    <property type="evidence" value="ECO:0000353"/>
    <property type="project" value="TAIR"/>
</dbReference>
<dbReference type="GO" id="GO:0009873">
    <property type="term" value="P:ethylene-activated signaling pathway"/>
    <property type="evidence" value="ECO:0007669"/>
    <property type="project" value="UniProtKB-KW"/>
</dbReference>
<dbReference type="GO" id="GO:0009861">
    <property type="term" value="P:jasmonic acid and ethylene-dependent systemic resistance"/>
    <property type="evidence" value="ECO:0000315"/>
    <property type="project" value="TAIR"/>
</dbReference>
<dbReference type="GO" id="GO:0045893">
    <property type="term" value="P:positive regulation of DNA-templated transcription"/>
    <property type="evidence" value="ECO:0000314"/>
    <property type="project" value="TAIR"/>
</dbReference>
<dbReference type="GO" id="GO:0045088">
    <property type="term" value="P:regulation of innate immune response"/>
    <property type="evidence" value="ECO:0000315"/>
    <property type="project" value="TAIR"/>
</dbReference>
<dbReference type="GO" id="GO:1900030">
    <property type="term" value="P:regulation of pectin biosynthetic process"/>
    <property type="evidence" value="ECO:0000315"/>
    <property type="project" value="TAIR"/>
</dbReference>
<dbReference type="GO" id="GO:0009863">
    <property type="term" value="P:salicylic acid mediated signaling pathway"/>
    <property type="evidence" value="ECO:0000315"/>
    <property type="project" value="TAIR"/>
</dbReference>
<dbReference type="CDD" id="cd00018">
    <property type="entry name" value="AP2"/>
    <property type="match status" value="1"/>
</dbReference>
<dbReference type="FunFam" id="3.30.730.10:FF:000006">
    <property type="entry name" value="ethylene-responsive transcription factor ERF014-like"/>
    <property type="match status" value="1"/>
</dbReference>
<dbReference type="Gene3D" id="3.30.730.10">
    <property type="entry name" value="AP2/ERF domain"/>
    <property type="match status" value="1"/>
</dbReference>
<dbReference type="InterPro" id="IPR001471">
    <property type="entry name" value="AP2/ERF_dom"/>
</dbReference>
<dbReference type="InterPro" id="IPR036955">
    <property type="entry name" value="AP2/ERF_dom_sf"/>
</dbReference>
<dbReference type="InterPro" id="IPR051032">
    <property type="entry name" value="AP2/ERF_TF_ERF_subfamily"/>
</dbReference>
<dbReference type="InterPro" id="IPR016177">
    <property type="entry name" value="DNA-bd_dom_sf"/>
</dbReference>
<dbReference type="PANTHER" id="PTHR31985:SF231">
    <property type="entry name" value="ETHYLENE-RESPONSIVE TRANSCRIPTION FACTOR ERF014"/>
    <property type="match status" value="1"/>
</dbReference>
<dbReference type="PANTHER" id="PTHR31985">
    <property type="entry name" value="ETHYLENE-RESPONSIVE TRANSCRIPTION FACTOR ERF042-RELATED"/>
    <property type="match status" value="1"/>
</dbReference>
<dbReference type="Pfam" id="PF00847">
    <property type="entry name" value="AP2"/>
    <property type="match status" value="1"/>
</dbReference>
<dbReference type="PRINTS" id="PR00367">
    <property type="entry name" value="ETHRSPELEMNT"/>
</dbReference>
<dbReference type="SMART" id="SM00380">
    <property type="entry name" value="AP2"/>
    <property type="match status" value="1"/>
</dbReference>
<dbReference type="SUPFAM" id="SSF54171">
    <property type="entry name" value="DNA-binding domain"/>
    <property type="match status" value="1"/>
</dbReference>
<dbReference type="PROSITE" id="PS51032">
    <property type="entry name" value="AP2_ERF"/>
    <property type="match status" value="1"/>
</dbReference>
<sequence>MVKTLQKTPKRMSSPSSSSSSSSSTSSSSIRMKKYKGVRMRSWGSWVSEIRAPNQKTRIWLGSYSTAEAAARAYDAALLCLKGSSANNLNFPEISTSLYHIINNGDNNNDMSPKSIQRVAAAAAAANTDPSSSSVSTSSPLLSSPSEDLYDVVSMSQYDQQVSLSESSSWYNCFDGDDQFMFINGVSAPYLTTSLSDDFFEEGDIRLWNFC</sequence>
<reference key="1">
    <citation type="submission" date="2004-02" db="EMBL/GenBank/DDBJ databases">
        <title>Molecular cloning, expression, phylogenetic and functional characterization of the Arabidopsis AP2/EREBP transcription factor family.</title>
        <authorList>
            <person name="Pan Y."/>
            <person name="Gong W."/>
            <person name="Liu D."/>
            <person name="Fu Q."/>
            <person name="Mei W.-Q."/>
            <person name="Song W.-Q."/>
            <person name="Ma L.-G."/>
            <person name="Luo J.-C."/>
            <person name="Deng X.-W."/>
            <person name="Zhu Y.-X."/>
        </authorList>
    </citation>
    <scope>NUCLEOTIDE SEQUENCE [MRNA]</scope>
</reference>
<reference key="2">
    <citation type="journal article" date="2000" name="Nature">
        <title>Sequence and analysis of chromosome 1 of the plant Arabidopsis thaliana.</title>
        <authorList>
            <person name="Theologis A."/>
            <person name="Ecker J.R."/>
            <person name="Palm C.J."/>
            <person name="Federspiel N.A."/>
            <person name="Kaul S."/>
            <person name="White O."/>
            <person name="Alonso J."/>
            <person name="Altafi H."/>
            <person name="Araujo R."/>
            <person name="Bowman C.L."/>
            <person name="Brooks S.Y."/>
            <person name="Buehler E."/>
            <person name="Chan A."/>
            <person name="Chao Q."/>
            <person name="Chen H."/>
            <person name="Cheuk R.F."/>
            <person name="Chin C.W."/>
            <person name="Chung M.K."/>
            <person name="Conn L."/>
            <person name="Conway A.B."/>
            <person name="Conway A.R."/>
            <person name="Creasy T.H."/>
            <person name="Dewar K."/>
            <person name="Dunn P."/>
            <person name="Etgu P."/>
            <person name="Feldblyum T.V."/>
            <person name="Feng J.-D."/>
            <person name="Fong B."/>
            <person name="Fujii C.Y."/>
            <person name="Gill J.E."/>
            <person name="Goldsmith A.D."/>
            <person name="Haas B."/>
            <person name="Hansen N.F."/>
            <person name="Hughes B."/>
            <person name="Huizar L."/>
            <person name="Hunter J.L."/>
            <person name="Jenkins J."/>
            <person name="Johnson-Hopson C."/>
            <person name="Khan S."/>
            <person name="Khaykin E."/>
            <person name="Kim C.J."/>
            <person name="Koo H.L."/>
            <person name="Kremenetskaia I."/>
            <person name="Kurtz D.B."/>
            <person name="Kwan A."/>
            <person name="Lam B."/>
            <person name="Langin-Hooper S."/>
            <person name="Lee A."/>
            <person name="Lee J.M."/>
            <person name="Lenz C.A."/>
            <person name="Li J.H."/>
            <person name="Li Y.-P."/>
            <person name="Lin X."/>
            <person name="Liu S.X."/>
            <person name="Liu Z.A."/>
            <person name="Luros J.S."/>
            <person name="Maiti R."/>
            <person name="Marziali A."/>
            <person name="Militscher J."/>
            <person name="Miranda M."/>
            <person name="Nguyen M."/>
            <person name="Nierman W.C."/>
            <person name="Osborne B.I."/>
            <person name="Pai G."/>
            <person name="Peterson J."/>
            <person name="Pham P.K."/>
            <person name="Rizzo M."/>
            <person name="Rooney T."/>
            <person name="Rowley D."/>
            <person name="Sakano H."/>
            <person name="Salzberg S.L."/>
            <person name="Schwartz J.R."/>
            <person name="Shinn P."/>
            <person name="Southwick A.M."/>
            <person name="Sun H."/>
            <person name="Tallon L.J."/>
            <person name="Tambunga G."/>
            <person name="Toriumi M.J."/>
            <person name="Town C.D."/>
            <person name="Utterback T."/>
            <person name="Van Aken S."/>
            <person name="Vaysberg M."/>
            <person name="Vysotskaia V.S."/>
            <person name="Walker M."/>
            <person name="Wu D."/>
            <person name="Yu G."/>
            <person name="Fraser C.M."/>
            <person name="Venter J.C."/>
            <person name="Davis R.W."/>
        </authorList>
    </citation>
    <scope>NUCLEOTIDE SEQUENCE [LARGE SCALE GENOMIC DNA]</scope>
    <source>
        <strain>cv. Columbia</strain>
    </source>
</reference>
<reference key="3">
    <citation type="journal article" date="2017" name="Plant J.">
        <title>Araport11: a complete reannotation of the Arabidopsis thaliana reference genome.</title>
        <authorList>
            <person name="Cheng C.Y."/>
            <person name="Krishnakumar V."/>
            <person name="Chan A.P."/>
            <person name="Thibaud-Nissen F."/>
            <person name="Schobel S."/>
            <person name="Town C.D."/>
        </authorList>
    </citation>
    <scope>GENOME REANNOTATION</scope>
    <source>
        <strain>cv. Columbia</strain>
    </source>
</reference>
<reference key="4">
    <citation type="submission" date="2006-04" db="EMBL/GenBank/DDBJ databases">
        <title>Arabidopsis ORF clones.</title>
        <authorList>
            <person name="Shinn P."/>
            <person name="Chen H."/>
            <person name="Kim C.J."/>
            <person name="Ecker J.R."/>
        </authorList>
    </citation>
    <scope>NUCLEOTIDE SEQUENCE [LARGE SCALE MRNA]</scope>
    <source>
        <strain>cv. Columbia</strain>
    </source>
</reference>
<reference key="5">
    <citation type="submission" date="2004-09" db="EMBL/GenBank/DDBJ databases">
        <title>Large-scale analysis of RIKEN Arabidopsis full-length (RAFL) cDNAs.</title>
        <authorList>
            <person name="Totoki Y."/>
            <person name="Seki M."/>
            <person name="Ishida J."/>
            <person name="Nakajima M."/>
            <person name="Enju A."/>
            <person name="Kamiya A."/>
            <person name="Narusaka M."/>
            <person name="Shin-i T."/>
            <person name="Nakagawa M."/>
            <person name="Sakamoto N."/>
            <person name="Oishi K."/>
            <person name="Kohara Y."/>
            <person name="Kobayashi M."/>
            <person name="Toyoda A."/>
            <person name="Sakaki Y."/>
            <person name="Sakurai T."/>
            <person name="Iida K."/>
            <person name="Akiyama K."/>
            <person name="Satou M."/>
            <person name="Toyoda T."/>
            <person name="Konagaya A."/>
            <person name="Carninci P."/>
            <person name="Kawai J."/>
            <person name="Hayashizaki Y."/>
            <person name="Shinozaki K."/>
        </authorList>
    </citation>
    <scope>NUCLEOTIDE SEQUENCE [LARGE SCALE MRNA] OF 11-211</scope>
    <source>
        <strain>cv. Columbia</strain>
    </source>
</reference>
<reference key="6">
    <citation type="journal article" date="2006" name="Plant Physiol.">
        <title>Genome-wide analysis of the ERF gene family in Arabidopsis and rice.</title>
        <authorList>
            <person name="Nakano T."/>
            <person name="Suzuki K."/>
            <person name="Fujimura T."/>
            <person name="Shinshi H."/>
        </authorList>
    </citation>
    <scope>GENE FAMILY</scope>
    <scope>NOMENCLATURE</scope>
</reference>
<keyword id="KW-0010">Activator</keyword>
<keyword id="KW-0238">DNA-binding</keyword>
<keyword id="KW-0936">Ethylene signaling pathway</keyword>
<keyword id="KW-0539">Nucleus</keyword>
<keyword id="KW-1185">Reference proteome</keyword>
<keyword id="KW-0804">Transcription</keyword>
<keyword id="KW-0805">Transcription regulation</keyword>
<gene>
    <name type="primary">ERF014</name>
    <name type="ordered locus">At1g44830</name>
    <name type="ORF">T12C22.10</name>
</gene>
<name>ERF14_ARATH</name>
<protein>
    <recommendedName>
        <fullName>Ethylene-responsive transcription factor ERF014</fullName>
    </recommendedName>
</protein>
<comment type="function">
    <text evidence="1">Probably acts as a transcriptional activator. Binds to the GCC-box pathogenesis-related promoter element. May be involved in the regulation of gene expression by stress factors and by components of stress signal transduction pathways (By similarity).</text>
</comment>
<comment type="subcellular location">
    <subcellularLocation>
        <location evidence="4">Nucleus</location>
    </subcellularLocation>
</comment>
<comment type="similarity">
    <text evidence="4">Belongs to the AP2/ERF transcription factor family. ERF subfamily.</text>
</comment>
<evidence type="ECO:0000250" key="1"/>
<evidence type="ECO:0000255" key="2">
    <source>
        <dbReference type="PROSITE-ProRule" id="PRU00366"/>
    </source>
</evidence>
<evidence type="ECO:0000256" key="3">
    <source>
        <dbReference type="SAM" id="MobiDB-lite"/>
    </source>
</evidence>
<evidence type="ECO:0000305" key="4"/>
<accession>Q9LPE8</accession>
<accession>Q681W4</accession>
<proteinExistence type="evidence at transcript level"/>
<feature type="chain" id="PRO_0000297922" description="Ethylene-responsive transcription factor ERF014">
    <location>
        <begin position="1"/>
        <end position="211"/>
    </location>
</feature>
<feature type="DNA-binding region" description="AP2/ERF" evidence="2">
    <location>
        <begin position="34"/>
        <end position="92"/>
    </location>
</feature>
<feature type="region of interest" description="Disordered" evidence="3">
    <location>
        <begin position="1"/>
        <end position="32"/>
    </location>
</feature>
<feature type="compositionally biased region" description="Low complexity" evidence="3">
    <location>
        <begin position="13"/>
        <end position="29"/>
    </location>
</feature>
<feature type="sequence conflict" description="In Ref. 5; BAD43266." evidence="4" ref="5">
    <original>L</original>
    <variation>I</variation>
    <location>
        <position position="89"/>
    </location>
</feature>
<organism>
    <name type="scientific">Arabidopsis thaliana</name>
    <name type="common">Mouse-ear cress</name>
    <dbReference type="NCBI Taxonomy" id="3702"/>
    <lineage>
        <taxon>Eukaryota</taxon>
        <taxon>Viridiplantae</taxon>
        <taxon>Streptophyta</taxon>
        <taxon>Embryophyta</taxon>
        <taxon>Tracheophyta</taxon>
        <taxon>Spermatophyta</taxon>
        <taxon>Magnoliopsida</taxon>
        <taxon>eudicotyledons</taxon>
        <taxon>Gunneridae</taxon>
        <taxon>Pentapetalae</taxon>
        <taxon>rosids</taxon>
        <taxon>malvids</taxon>
        <taxon>Brassicales</taxon>
        <taxon>Brassicaceae</taxon>
        <taxon>Camelineae</taxon>
        <taxon>Arabidopsis</taxon>
    </lineage>
</organism>